<organism>
    <name type="scientific">Borreliella burgdorferi (strain ATCC 35210 / DSM 4680 / CIP 102532 / B31)</name>
    <name type="common">Borrelia burgdorferi</name>
    <dbReference type="NCBI Taxonomy" id="224326"/>
    <lineage>
        <taxon>Bacteria</taxon>
        <taxon>Pseudomonadati</taxon>
        <taxon>Spirochaetota</taxon>
        <taxon>Spirochaetia</taxon>
        <taxon>Spirochaetales</taxon>
        <taxon>Borreliaceae</taxon>
        <taxon>Borreliella</taxon>
    </lineage>
</organism>
<sequence length="697" mass="76969">MLDARKNSILGYLGLNNKSDLIISVGLIFVVAGFILPLPAVILDVLITVNLVISLLIILIVLYSKRSLDFSVFPTLLLVMTIFGLVLNISSTRLILTKGINFDGQMIRTFGTFVVGSSGIQGLVIGFIIFIIIIAVQFIVITKGATRVAEVAARFALDALPGKQMAIDSAYSSGNLTEEEATRQKNDLQSEVNFYGAMDGASKFVSGNVKVGFLITLINILGGLLVGITLQGLNFNEALNNYVSLTVGDGLVSQLPSLLISTSTGLIVTRSISKNSFGGEIFDQFTNHLGIYWIVSGFLLFLAFLPGFPTLILMFLSLSIAFLAYSLSGIRQKEEIDKKMKLEEEQASIYSDKDVSPVVPLDPLALEIGYNLVPIVDDTKTSELLDRIVKIRREIAFEFGIVVPKIRIVDNMRLEPNAYSFKLRGVEVGRGEIKLGKFLVINVGIDSGIDGDLVKDPSFGLPSLWVNDDGRETAEKLGYTVVDPPSIIATHMTELIKRHSYEILTRQDVQNTLDVFKKDYGAIVEEVLKNFSVGEIQRVLQGLLKEQVSIRNLVTIFETIADFTSITKDIFFLIEKCRQSVGRQITSGYLDLNSELNVITLNPSFEQMIIDSRVESNHDLISSIDPNLKTKFIYELFKIVNEVQAEGFYPVVLSSESSRPIIKVITSREIPDLVVMSVLEVPQNIKVNVLKTVEVEE</sequence>
<dbReference type="EMBL" id="U43739">
    <property type="protein sequence ID" value="AAA85595.1"/>
    <property type="status" value="ALT_INIT"/>
    <property type="molecule type" value="Genomic_DNA"/>
</dbReference>
<dbReference type="EMBL" id="L75945">
    <property type="protein sequence ID" value="AAB58972.1"/>
    <property type="molecule type" value="Genomic_DNA"/>
</dbReference>
<dbReference type="EMBL" id="AE000783">
    <property type="protein sequence ID" value="AAC66677.1"/>
    <property type="molecule type" value="Genomic_DNA"/>
</dbReference>
<dbReference type="PIR" id="G70133">
    <property type="entry name" value="G70133"/>
</dbReference>
<dbReference type="RefSeq" id="NP_212405.1">
    <property type="nucleotide sequence ID" value="NC_001318.1"/>
</dbReference>
<dbReference type="RefSeq" id="WP_010889723.1">
    <property type="nucleotide sequence ID" value="NC_001318.1"/>
</dbReference>
<dbReference type="SMR" id="Q44909"/>
<dbReference type="STRING" id="224326.BB_0271"/>
<dbReference type="PaxDb" id="224326-BB_0271"/>
<dbReference type="EnsemblBacteria" id="AAC66677">
    <property type="protein sequence ID" value="AAC66677"/>
    <property type="gene ID" value="BB_0271"/>
</dbReference>
<dbReference type="GeneID" id="56567702"/>
<dbReference type="KEGG" id="bbu:BB_0271"/>
<dbReference type="PATRIC" id="fig|224326.49.peg.670"/>
<dbReference type="HOGENOM" id="CLU_015346_3_0_12"/>
<dbReference type="OrthoDB" id="9759185at2"/>
<dbReference type="Proteomes" id="UP000001807">
    <property type="component" value="Chromosome"/>
</dbReference>
<dbReference type="GO" id="GO:0005886">
    <property type="term" value="C:plasma membrane"/>
    <property type="evidence" value="ECO:0007669"/>
    <property type="project" value="UniProtKB-SubCell"/>
</dbReference>
<dbReference type="GO" id="GO:0044780">
    <property type="term" value="P:bacterial-type flagellum assembly"/>
    <property type="evidence" value="ECO:0007669"/>
    <property type="project" value="InterPro"/>
</dbReference>
<dbReference type="GO" id="GO:0009306">
    <property type="term" value="P:protein secretion"/>
    <property type="evidence" value="ECO:0007669"/>
    <property type="project" value="InterPro"/>
</dbReference>
<dbReference type="Gene3D" id="3.40.30.60">
    <property type="entry name" value="FHIPEP family, domain 1"/>
    <property type="match status" value="1"/>
</dbReference>
<dbReference type="Gene3D" id="1.10.8.540">
    <property type="entry name" value="FHIPEP family, domain 3"/>
    <property type="match status" value="1"/>
</dbReference>
<dbReference type="Gene3D" id="3.40.50.12790">
    <property type="entry name" value="FHIPEP family, domain 4"/>
    <property type="match status" value="1"/>
</dbReference>
<dbReference type="InterPro" id="IPR042194">
    <property type="entry name" value="FHIPEP_1"/>
</dbReference>
<dbReference type="InterPro" id="IPR042193">
    <property type="entry name" value="FHIPEP_3"/>
</dbReference>
<dbReference type="InterPro" id="IPR042196">
    <property type="entry name" value="FHIPEP_4"/>
</dbReference>
<dbReference type="InterPro" id="IPR025505">
    <property type="entry name" value="FHIPEP_CS"/>
</dbReference>
<dbReference type="InterPro" id="IPR006301">
    <property type="entry name" value="FlhA"/>
</dbReference>
<dbReference type="InterPro" id="IPR001712">
    <property type="entry name" value="T3SS_FHIPEP"/>
</dbReference>
<dbReference type="NCBIfam" id="TIGR01398">
    <property type="entry name" value="FlhA"/>
    <property type="match status" value="1"/>
</dbReference>
<dbReference type="PANTHER" id="PTHR30161:SF1">
    <property type="entry name" value="FLAGELLAR BIOSYNTHESIS PROTEIN FLHA-RELATED"/>
    <property type="match status" value="1"/>
</dbReference>
<dbReference type="PANTHER" id="PTHR30161">
    <property type="entry name" value="FLAGELLAR EXPORT PROTEIN, MEMBRANE FLHA SUBUNIT-RELATED"/>
    <property type="match status" value="1"/>
</dbReference>
<dbReference type="Pfam" id="PF00771">
    <property type="entry name" value="FHIPEP"/>
    <property type="match status" value="1"/>
</dbReference>
<dbReference type="PIRSF" id="PIRSF005419">
    <property type="entry name" value="FlhA"/>
    <property type="match status" value="1"/>
</dbReference>
<dbReference type="PRINTS" id="PR00949">
    <property type="entry name" value="TYPE3IMAPROT"/>
</dbReference>
<dbReference type="PROSITE" id="PS00994">
    <property type="entry name" value="FHIPEP"/>
    <property type="match status" value="1"/>
</dbReference>
<proteinExistence type="inferred from homology"/>
<feature type="chain" id="PRO_0000190011" description="Flagellar biosynthesis protein FlhA">
    <location>
        <begin position="1"/>
        <end position="697"/>
    </location>
</feature>
<feature type="transmembrane region" description="Helical" evidence="2">
    <location>
        <begin position="22"/>
        <end position="42"/>
    </location>
</feature>
<feature type="transmembrane region" description="Helical" evidence="2">
    <location>
        <begin position="43"/>
        <end position="63"/>
    </location>
</feature>
<feature type="transmembrane region" description="Helical" evidence="2">
    <location>
        <begin position="70"/>
        <end position="90"/>
    </location>
</feature>
<feature type="transmembrane region" description="Helical" evidence="2">
    <location>
        <begin position="122"/>
        <end position="142"/>
    </location>
</feature>
<feature type="transmembrane region" description="Helical" evidence="2">
    <location>
        <begin position="211"/>
        <end position="231"/>
    </location>
</feature>
<feature type="transmembrane region" description="Helical" evidence="2">
    <location>
        <begin position="247"/>
        <end position="267"/>
    </location>
</feature>
<feature type="transmembrane region" description="Helical" evidence="2">
    <location>
        <begin position="277"/>
        <end position="297"/>
    </location>
</feature>
<feature type="transmembrane region" description="Helical" evidence="2">
    <location>
        <begin position="298"/>
        <end position="318"/>
    </location>
</feature>
<feature type="transmembrane region" description="Helical" evidence="2">
    <location>
        <begin position="355"/>
        <end position="375"/>
    </location>
</feature>
<feature type="sequence conflict" description="In Ref. 1." evidence="3" ref="1">
    <original>QNI</original>
    <variation>PKY</variation>
    <location>
        <begin position="683"/>
        <end position="685"/>
    </location>
</feature>
<comment type="function">
    <text evidence="1">Required for formation of the rod structure of the flagellar apparatus. Together with FliI and FliH, may constitute the export apparatus of flagellin (By similarity).</text>
</comment>
<comment type="subcellular location">
    <subcellularLocation>
        <location evidence="3">Cell membrane</location>
        <topology evidence="3">Multi-pass membrane protein</topology>
    </subcellularLocation>
</comment>
<comment type="similarity">
    <text evidence="3">Belongs to the FHIPEP (flagella/HR/invasion proteins export pore) family.</text>
</comment>
<comment type="sequence caution" evidence="3">
    <conflict type="erroneous initiation">
        <sequence resource="EMBL-CDS" id="AAA85595"/>
    </conflict>
</comment>
<keyword id="KW-1005">Bacterial flagellum biogenesis</keyword>
<keyword id="KW-1006">Bacterial flagellum protein export</keyword>
<keyword id="KW-1003">Cell membrane</keyword>
<keyword id="KW-0472">Membrane</keyword>
<keyword id="KW-0653">Protein transport</keyword>
<keyword id="KW-1185">Reference proteome</keyword>
<keyword id="KW-0812">Transmembrane</keyword>
<keyword id="KW-1133">Transmembrane helix</keyword>
<keyword id="KW-0813">Transport</keyword>
<protein>
    <recommendedName>
        <fullName>Flagellar biosynthesis protein FlhA</fullName>
    </recommendedName>
</protein>
<evidence type="ECO:0000250" key="1"/>
<evidence type="ECO:0000255" key="2"/>
<evidence type="ECO:0000305" key="3"/>
<reference key="1">
    <citation type="submission" date="1995-12" db="EMBL/GenBank/DDBJ databases">
        <authorList>
            <person name="Dunn J.J."/>
            <person name="Butler-Loffredo L."/>
            <person name="Kieleczawa J."/>
            <person name="Medalle J."/>
            <person name="Luft B.J."/>
        </authorList>
    </citation>
    <scope>NUCLEOTIDE SEQUENCE [GENOMIC DNA]</scope>
    <source>
        <strain>ATCC 35210 / DSM 4680 / CIP 102532 / B31</strain>
    </source>
</reference>
<reference key="2">
    <citation type="submission" date="1996-02" db="EMBL/GenBank/DDBJ databases">
        <authorList>
            <person name="Ge Y."/>
            <person name="Charon N.W."/>
        </authorList>
    </citation>
    <scope>NUCLEOTIDE SEQUENCE [GENOMIC DNA]</scope>
    <source>
        <strain>212</strain>
    </source>
</reference>
<reference key="3">
    <citation type="journal article" date="1997" name="Nature">
        <title>Genomic sequence of a Lyme disease spirochaete, Borrelia burgdorferi.</title>
        <authorList>
            <person name="Fraser C.M."/>
            <person name="Casjens S."/>
            <person name="Huang W.M."/>
            <person name="Sutton G.G."/>
            <person name="Clayton R.A."/>
            <person name="Lathigra R."/>
            <person name="White O."/>
            <person name="Ketchum K.A."/>
            <person name="Dodson R.J."/>
            <person name="Hickey E.K."/>
            <person name="Gwinn M.L."/>
            <person name="Dougherty B.A."/>
            <person name="Tomb J.-F."/>
            <person name="Fleischmann R.D."/>
            <person name="Richardson D.L."/>
            <person name="Peterson J.D."/>
            <person name="Kerlavage A.R."/>
            <person name="Quackenbush J."/>
            <person name="Salzberg S.L."/>
            <person name="Hanson M."/>
            <person name="van Vugt R."/>
            <person name="Palmer N."/>
            <person name="Adams M.D."/>
            <person name="Gocayne J.D."/>
            <person name="Weidman J.F."/>
            <person name="Utterback T.R."/>
            <person name="Watthey L."/>
            <person name="McDonald L.A."/>
            <person name="Artiach P."/>
            <person name="Bowman C."/>
            <person name="Garland S.A."/>
            <person name="Fujii C."/>
            <person name="Cotton M.D."/>
            <person name="Horst K."/>
            <person name="Roberts K.M."/>
            <person name="Hatch B."/>
            <person name="Smith H.O."/>
            <person name="Venter J.C."/>
        </authorList>
    </citation>
    <scope>NUCLEOTIDE SEQUENCE [LARGE SCALE GENOMIC DNA]</scope>
    <source>
        <strain>ATCC 35210 / DSM 4680 / CIP 102532 / B31</strain>
    </source>
</reference>
<name>FLHA_BORBU</name>
<gene>
    <name type="primary">flhA</name>
    <name type="ordered locus">BB_0271</name>
</gene>
<accession>Q44909</accession>
<accession>Q44759</accession>